<name>SYM1_NEUCR</name>
<comment type="function">
    <text evidence="1">May be involved in cellular response to stress. Required to maintain mitochondrial DNA (mtDNA) integrity and stability (By similarity).</text>
</comment>
<comment type="subcellular location">
    <subcellularLocation>
        <location evidence="1">Mitochondrion inner membrane</location>
        <topology evidence="1">Multi-pass membrane protein</topology>
    </subcellularLocation>
</comment>
<comment type="similarity">
    <text evidence="3">Belongs to the peroxisomal membrane protein PXMP2/4 family.</text>
</comment>
<sequence length="172" mass="19208">MLSWYKAQLAARPLLTQAVTTSILFGVGDVAAQQLVDRRGLSNHDLTRTGRMVLYGGAVFGPAATTWFRFLQKRVVVPGSTNKTILARVAADQGLFAPTFIGIFLGSMAVLEGTDVKEKLQKNYWEALSTNWMVWPFVQMVNFKVVPLDHRVLFVNVISIGWNCYLSWLNGQ</sequence>
<feature type="chain" id="PRO_0000234414" description="Protein sym-1">
    <location>
        <begin position="1"/>
        <end position="172"/>
    </location>
</feature>
<feature type="transmembrane region" description="Helical" evidence="2">
    <location>
        <begin position="13"/>
        <end position="33"/>
    </location>
</feature>
<feature type="transmembrane region" description="Helical" evidence="2">
    <location>
        <begin position="52"/>
        <end position="72"/>
    </location>
</feature>
<feature type="transmembrane region" description="Helical" evidence="2">
    <location>
        <begin position="94"/>
        <end position="114"/>
    </location>
</feature>
<feature type="transmembrane region" description="Helical" evidence="2">
    <location>
        <begin position="128"/>
        <end position="148"/>
    </location>
</feature>
<feature type="transmembrane region" description="Helical" evidence="2">
    <location>
        <begin position="152"/>
        <end position="172"/>
    </location>
</feature>
<evidence type="ECO:0000250" key="1"/>
<evidence type="ECO:0000255" key="2"/>
<evidence type="ECO:0000305" key="3"/>
<gene>
    <name type="primary">sym-1</name>
    <name type="ORF">NCU02117</name>
</gene>
<proteinExistence type="inferred from homology"/>
<keyword id="KW-0472">Membrane</keyword>
<keyword id="KW-0496">Mitochondrion</keyword>
<keyword id="KW-0999">Mitochondrion inner membrane</keyword>
<keyword id="KW-1185">Reference proteome</keyword>
<keyword id="KW-0812">Transmembrane</keyword>
<keyword id="KW-1133">Transmembrane helix</keyword>
<accession>Q7SCY7</accession>
<organism>
    <name type="scientific">Neurospora crassa (strain ATCC 24698 / 74-OR23-1A / CBS 708.71 / DSM 1257 / FGSC 987)</name>
    <dbReference type="NCBI Taxonomy" id="367110"/>
    <lineage>
        <taxon>Eukaryota</taxon>
        <taxon>Fungi</taxon>
        <taxon>Dikarya</taxon>
        <taxon>Ascomycota</taxon>
        <taxon>Pezizomycotina</taxon>
        <taxon>Sordariomycetes</taxon>
        <taxon>Sordariomycetidae</taxon>
        <taxon>Sordariales</taxon>
        <taxon>Sordariaceae</taxon>
        <taxon>Neurospora</taxon>
    </lineage>
</organism>
<reference key="1">
    <citation type="journal article" date="2003" name="Nature">
        <title>The genome sequence of the filamentous fungus Neurospora crassa.</title>
        <authorList>
            <person name="Galagan J.E."/>
            <person name="Calvo S.E."/>
            <person name="Borkovich K.A."/>
            <person name="Selker E.U."/>
            <person name="Read N.D."/>
            <person name="Jaffe D.B."/>
            <person name="FitzHugh W."/>
            <person name="Ma L.-J."/>
            <person name="Smirnov S."/>
            <person name="Purcell S."/>
            <person name="Rehman B."/>
            <person name="Elkins T."/>
            <person name="Engels R."/>
            <person name="Wang S."/>
            <person name="Nielsen C.B."/>
            <person name="Butler J."/>
            <person name="Endrizzi M."/>
            <person name="Qui D."/>
            <person name="Ianakiev P."/>
            <person name="Bell-Pedersen D."/>
            <person name="Nelson M.A."/>
            <person name="Werner-Washburne M."/>
            <person name="Selitrennikoff C.P."/>
            <person name="Kinsey J.A."/>
            <person name="Braun E.L."/>
            <person name="Zelter A."/>
            <person name="Schulte U."/>
            <person name="Kothe G.O."/>
            <person name="Jedd G."/>
            <person name="Mewes H.-W."/>
            <person name="Staben C."/>
            <person name="Marcotte E."/>
            <person name="Greenberg D."/>
            <person name="Roy A."/>
            <person name="Foley K."/>
            <person name="Naylor J."/>
            <person name="Stange-Thomann N."/>
            <person name="Barrett R."/>
            <person name="Gnerre S."/>
            <person name="Kamal M."/>
            <person name="Kamvysselis M."/>
            <person name="Mauceli E.W."/>
            <person name="Bielke C."/>
            <person name="Rudd S."/>
            <person name="Frishman D."/>
            <person name="Krystofova S."/>
            <person name="Rasmussen C."/>
            <person name="Metzenberg R.L."/>
            <person name="Perkins D.D."/>
            <person name="Kroken S."/>
            <person name="Cogoni C."/>
            <person name="Macino G."/>
            <person name="Catcheside D.E.A."/>
            <person name="Li W."/>
            <person name="Pratt R.J."/>
            <person name="Osmani S.A."/>
            <person name="DeSouza C.P.C."/>
            <person name="Glass N.L."/>
            <person name="Orbach M.J."/>
            <person name="Berglund J.A."/>
            <person name="Voelker R."/>
            <person name="Yarden O."/>
            <person name="Plamann M."/>
            <person name="Seiler S."/>
            <person name="Dunlap J.C."/>
            <person name="Radford A."/>
            <person name="Aramayo R."/>
            <person name="Natvig D.O."/>
            <person name="Alex L.A."/>
            <person name="Mannhaupt G."/>
            <person name="Ebbole D.J."/>
            <person name="Freitag M."/>
            <person name="Paulsen I."/>
            <person name="Sachs M.S."/>
            <person name="Lander E.S."/>
            <person name="Nusbaum C."/>
            <person name="Birren B.W."/>
        </authorList>
    </citation>
    <scope>NUCLEOTIDE SEQUENCE [LARGE SCALE GENOMIC DNA]</scope>
    <source>
        <strain>ATCC 24698 / 74-OR23-1A / CBS 708.71 / DSM 1257 / FGSC 987</strain>
    </source>
</reference>
<protein>
    <recommendedName>
        <fullName>Protein sym-1</fullName>
    </recommendedName>
</protein>
<dbReference type="EMBL" id="CM002236">
    <property type="protein sequence ID" value="EAA34618.2"/>
    <property type="molecule type" value="Genomic_DNA"/>
</dbReference>
<dbReference type="RefSeq" id="XP_963854.2">
    <property type="nucleotide sequence ID" value="XM_958761.3"/>
</dbReference>
<dbReference type="FunCoup" id="Q7SCY7">
    <property type="interactions" value="545"/>
</dbReference>
<dbReference type="STRING" id="367110.Q7SCY7"/>
<dbReference type="PaxDb" id="5141-EFNCRP00000001117"/>
<dbReference type="EnsemblFungi" id="EAA34618">
    <property type="protein sequence ID" value="EAA34618"/>
    <property type="gene ID" value="NCU02117"/>
</dbReference>
<dbReference type="GeneID" id="3880003"/>
<dbReference type="KEGG" id="ncr:NCU02117"/>
<dbReference type="VEuPathDB" id="FungiDB:NCU02117"/>
<dbReference type="HOGENOM" id="CLU_049109_8_1_1"/>
<dbReference type="InParanoid" id="Q7SCY7"/>
<dbReference type="OrthoDB" id="430207at2759"/>
<dbReference type="Proteomes" id="UP000001805">
    <property type="component" value="Chromosome 1, Linkage Group I"/>
</dbReference>
<dbReference type="GO" id="GO:0005737">
    <property type="term" value="C:cytoplasm"/>
    <property type="evidence" value="ECO:0000318"/>
    <property type="project" value="GO_Central"/>
</dbReference>
<dbReference type="GO" id="GO:0005743">
    <property type="term" value="C:mitochondrial inner membrane"/>
    <property type="evidence" value="ECO:0007669"/>
    <property type="project" value="UniProtKB-SubCell"/>
</dbReference>
<dbReference type="GO" id="GO:0005739">
    <property type="term" value="C:mitochondrion"/>
    <property type="evidence" value="ECO:0000318"/>
    <property type="project" value="GO_Central"/>
</dbReference>
<dbReference type="GO" id="GO:0006067">
    <property type="term" value="P:ethanol metabolic process"/>
    <property type="evidence" value="ECO:0007669"/>
    <property type="project" value="EnsemblFungi"/>
</dbReference>
<dbReference type="InterPro" id="IPR007248">
    <property type="entry name" value="Mpv17_PMP22"/>
</dbReference>
<dbReference type="PANTHER" id="PTHR11266">
    <property type="entry name" value="PEROXISOMAL MEMBRANE PROTEIN 2, PXMP2 MPV17"/>
    <property type="match status" value="1"/>
</dbReference>
<dbReference type="PANTHER" id="PTHR11266:SF17">
    <property type="entry name" value="PROTEIN MPV17"/>
    <property type="match status" value="1"/>
</dbReference>
<dbReference type="Pfam" id="PF04117">
    <property type="entry name" value="Mpv17_PMP22"/>
    <property type="match status" value="1"/>
</dbReference>